<reference key="1">
    <citation type="journal article" date="1995" name="J. Bacteriol.">
        <title>Cloning and characterization of the sigA gene encoding the major sigma subunit of Rhizobium meliloti.</title>
        <authorList>
            <person name="Rushing B.G."/>
            <person name="Long S.R."/>
        </authorList>
    </citation>
    <scope>NUCLEOTIDE SEQUENCE [GENOMIC DNA]</scope>
    <source>
        <strain>1021</strain>
    </source>
</reference>
<reference key="2">
    <citation type="journal article" date="2001" name="Proc. Natl. Acad. Sci. U.S.A.">
        <title>Analysis of the chromosome sequence of the legume symbiont Sinorhizobium meliloti strain 1021.</title>
        <authorList>
            <person name="Capela D."/>
            <person name="Barloy-Hubler F."/>
            <person name="Gouzy J."/>
            <person name="Bothe G."/>
            <person name="Ampe F."/>
            <person name="Batut J."/>
            <person name="Boistard P."/>
            <person name="Becker A."/>
            <person name="Boutry M."/>
            <person name="Cadieu E."/>
            <person name="Dreano S."/>
            <person name="Gloux S."/>
            <person name="Godrie T."/>
            <person name="Goffeau A."/>
            <person name="Kahn D."/>
            <person name="Kiss E."/>
            <person name="Lelaure V."/>
            <person name="Masuy D."/>
            <person name="Pohl T."/>
            <person name="Portetelle D."/>
            <person name="Puehler A."/>
            <person name="Purnelle B."/>
            <person name="Ramsperger U."/>
            <person name="Renard C."/>
            <person name="Thebault P."/>
            <person name="Vandenbol M."/>
            <person name="Weidner S."/>
            <person name="Galibert F."/>
        </authorList>
    </citation>
    <scope>NUCLEOTIDE SEQUENCE [LARGE SCALE GENOMIC DNA]</scope>
    <source>
        <strain>1021</strain>
    </source>
</reference>
<reference key="3">
    <citation type="journal article" date="2001" name="Science">
        <title>The composite genome of the legume symbiont Sinorhizobium meliloti.</title>
        <authorList>
            <person name="Galibert F."/>
            <person name="Finan T.M."/>
            <person name="Long S.R."/>
            <person name="Puehler A."/>
            <person name="Abola P."/>
            <person name="Ampe F."/>
            <person name="Barloy-Hubler F."/>
            <person name="Barnett M.J."/>
            <person name="Becker A."/>
            <person name="Boistard P."/>
            <person name="Bothe G."/>
            <person name="Boutry M."/>
            <person name="Bowser L."/>
            <person name="Buhrmester J."/>
            <person name="Cadieu E."/>
            <person name="Capela D."/>
            <person name="Chain P."/>
            <person name="Cowie A."/>
            <person name="Davis R.W."/>
            <person name="Dreano S."/>
            <person name="Federspiel N.A."/>
            <person name="Fisher R.F."/>
            <person name="Gloux S."/>
            <person name="Godrie T."/>
            <person name="Goffeau A."/>
            <person name="Golding B."/>
            <person name="Gouzy J."/>
            <person name="Gurjal M."/>
            <person name="Hernandez-Lucas I."/>
            <person name="Hong A."/>
            <person name="Huizar L."/>
            <person name="Hyman R.W."/>
            <person name="Jones T."/>
            <person name="Kahn D."/>
            <person name="Kahn M.L."/>
            <person name="Kalman S."/>
            <person name="Keating D.H."/>
            <person name="Kiss E."/>
            <person name="Komp C."/>
            <person name="Lelaure V."/>
            <person name="Masuy D."/>
            <person name="Palm C."/>
            <person name="Peck M.C."/>
            <person name="Pohl T.M."/>
            <person name="Portetelle D."/>
            <person name="Purnelle B."/>
            <person name="Ramsperger U."/>
            <person name="Surzycki R."/>
            <person name="Thebault P."/>
            <person name="Vandenbol M."/>
            <person name="Vorhoelter F.J."/>
            <person name="Weidner S."/>
            <person name="Wells D.H."/>
            <person name="Wong K."/>
            <person name="Yeh K.-C."/>
            <person name="Batut J."/>
        </authorList>
    </citation>
    <scope>NUCLEOTIDE SEQUENCE [LARGE SCALE GENOMIC DNA]</scope>
    <source>
        <strain>1021</strain>
    </source>
</reference>
<organism>
    <name type="scientific">Rhizobium meliloti (strain 1021)</name>
    <name type="common">Ensifer meliloti</name>
    <name type="synonym">Sinorhizobium meliloti</name>
    <dbReference type="NCBI Taxonomy" id="266834"/>
    <lineage>
        <taxon>Bacteria</taxon>
        <taxon>Pseudomonadati</taxon>
        <taxon>Pseudomonadota</taxon>
        <taxon>Alphaproteobacteria</taxon>
        <taxon>Hyphomicrobiales</taxon>
        <taxon>Rhizobiaceae</taxon>
        <taxon>Sinorhizobium/Ensifer group</taxon>
        <taxon>Sinorhizobium</taxon>
    </lineage>
</organism>
<protein>
    <recommendedName>
        <fullName evidence="1">RNA polymerase sigma factor RpoD</fullName>
        <shortName>Sigma-A</shortName>
    </recommendedName>
    <alternativeName>
        <fullName>Major vegetative sigma factor</fullName>
    </alternativeName>
</protein>
<keyword id="KW-0963">Cytoplasm</keyword>
<keyword id="KW-0238">DNA-binding</keyword>
<keyword id="KW-1185">Reference proteome</keyword>
<keyword id="KW-0731">Sigma factor</keyword>
<keyword id="KW-0804">Transcription</keyword>
<keyword id="KW-0805">Transcription regulation</keyword>
<dbReference type="EMBL" id="L47288">
    <property type="protein sequence ID" value="AAA88524.1"/>
    <property type="molecule type" value="Genomic_DNA"/>
</dbReference>
<dbReference type="EMBL" id="AL591688">
    <property type="protein sequence ID" value="CAC46893.1"/>
    <property type="molecule type" value="Genomic_DNA"/>
</dbReference>
<dbReference type="RefSeq" id="NP_386420.1">
    <property type="nucleotide sequence ID" value="NC_003047.1"/>
</dbReference>
<dbReference type="RefSeq" id="WP_003532953.1">
    <property type="nucleotide sequence ID" value="NC_003047.1"/>
</dbReference>
<dbReference type="SMR" id="Q59753"/>
<dbReference type="EnsemblBacteria" id="CAC46893">
    <property type="protein sequence ID" value="CAC46893"/>
    <property type="gene ID" value="SMc01563"/>
</dbReference>
<dbReference type="GeneID" id="89576704"/>
<dbReference type="KEGG" id="sme:SMc01563"/>
<dbReference type="PATRIC" id="fig|266834.11.peg.3792"/>
<dbReference type="eggNOG" id="COG0568">
    <property type="taxonomic scope" value="Bacteria"/>
</dbReference>
<dbReference type="HOGENOM" id="CLU_014793_7_2_5"/>
<dbReference type="OrthoDB" id="9809557at2"/>
<dbReference type="Proteomes" id="UP000001976">
    <property type="component" value="Chromosome"/>
</dbReference>
<dbReference type="GO" id="GO:0005737">
    <property type="term" value="C:cytoplasm"/>
    <property type="evidence" value="ECO:0007669"/>
    <property type="project" value="UniProtKB-SubCell"/>
</dbReference>
<dbReference type="GO" id="GO:0003677">
    <property type="term" value="F:DNA binding"/>
    <property type="evidence" value="ECO:0007669"/>
    <property type="project" value="UniProtKB-UniRule"/>
</dbReference>
<dbReference type="GO" id="GO:0016987">
    <property type="term" value="F:sigma factor activity"/>
    <property type="evidence" value="ECO:0007669"/>
    <property type="project" value="UniProtKB-UniRule"/>
</dbReference>
<dbReference type="GO" id="GO:0006352">
    <property type="term" value="P:DNA-templated transcription initiation"/>
    <property type="evidence" value="ECO:0007669"/>
    <property type="project" value="UniProtKB-UniRule"/>
</dbReference>
<dbReference type="CDD" id="cd06171">
    <property type="entry name" value="Sigma70_r4"/>
    <property type="match status" value="1"/>
</dbReference>
<dbReference type="FunFam" id="1.10.10.10:FF:000002">
    <property type="entry name" value="RNA polymerase sigma factor SigA"/>
    <property type="match status" value="1"/>
</dbReference>
<dbReference type="FunFam" id="1.10.10.10:FF:000004">
    <property type="entry name" value="RNA polymerase sigma factor SigA"/>
    <property type="match status" value="1"/>
</dbReference>
<dbReference type="FunFam" id="1.10.601.10:FF:000001">
    <property type="entry name" value="RNA polymerase sigma factor SigA"/>
    <property type="match status" value="1"/>
</dbReference>
<dbReference type="Gene3D" id="1.10.601.10">
    <property type="entry name" value="RNA Polymerase Primary Sigma Factor"/>
    <property type="match status" value="1"/>
</dbReference>
<dbReference type="Gene3D" id="1.10.220.120">
    <property type="entry name" value="Sigma-70 factor, region 1.1"/>
    <property type="match status" value="1"/>
</dbReference>
<dbReference type="Gene3D" id="1.10.10.10">
    <property type="entry name" value="Winged helix-like DNA-binding domain superfamily/Winged helix DNA-binding domain"/>
    <property type="match status" value="2"/>
</dbReference>
<dbReference type="HAMAP" id="MF_00963">
    <property type="entry name" value="Sigma70_RpoD_SigA"/>
    <property type="match status" value="1"/>
</dbReference>
<dbReference type="InterPro" id="IPR014284">
    <property type="entry name" value="RNA_pol_sigma-70_dom"/>
</dbReference>
<dbReference type="InterPro" id="IPR000943">
    <property type="entry name" value="RNA_pol_sigma70"/>
</dbReference>
<dbReference type="InterPro" id="IPR009042">
    <property type="entry name" value="RNA_pol_sigma70_r1_2"/>
</dbReference>
<dbReference type="InterPro" id="IPR007627">
    <property type="entry name" value="RNA_pol_sigma70_r2"/>
</dbReference>
<dbReference type="InterPro" id="IPR007624">
    <property type="entry name" value="RNA_pol_sigma70_r3"/>
</dbReference>
<dbReference type="InterPro" id="IPR007630">
    <property type="entry name" value="RNA_pol_sigma70_r4"/>
</dbReference>
<dbReference type="InterPro" id="IPR007631">
    <property type="entry name" value="RNA_pol_sigma_70_non-ess"/>
</dbReference>
<dbReference type="InterPro" id="IPR007127">
    <property type="entry name" value="RNA_pol_sigma_70_r1_1"/>
</dbReference>
<dbReference type="InterPro" id="IPR042189">
    <property type="entry name" value="RNA_pol_sigma_70_r1_1_sf"/>
</dbReference>
<dbReference type="InterPro" id="IPR013325">
    <property type="entry name" value="RNA_pol_sigma_r2"/>
</dbReference>
<dbReference type="InterPro" id="IPR013324">
    <property type="entry name" value="RNA_pol_sigma_r3/r4-like"/>
</dbReference>
<dbReference type="InterPro" id="IPR012760">
    <property type="entry name" value="RNA_pol_sigma_RpoD_C"/>
</dbReference>
<dbReference type="InterPro" id="IPR050239">
    <property type="entry name" value="Sigma-70_RNA_pol_init_factors"/>
</dbReference>
<dbReference type="InterPro" id="IPR028630">
    <property type="entry name" value="Sigma70_RpoD"/>
</dbReference>
<dbReference type="InterPro" id="IPR036388">
    <property type="entry name" value="WH-like_DNA-bd_sf"/>
</dbReference>
<dbReference type="NCBIfam" id="NF004208">
    <property type="entry name" value="PRK05658.1"/>
    <property type="match status" value="1"/>
</dbReference>
<dbReference type="NCBIfam" id="TIGR02393">
    <property type="entry name" value="RpoD_Cterm"/>
    <property type="match status" value="1"/>
</dbReference>
<dbReference type="NCBIfam" id="TIGR02937">
    <property type="entry name" value="sigma70-ECF"/>
    <property type="match status" value="1"/>
</dbReference>
<dbReference type="PANTHER" id="PTHR30603">
    <property type="entry name" value="RNA POLYMERASE SIGMA FACTOR RPO"/>
    <property type="match status" value="1"/>
</dbReference>
<dbReference type="PANTHER" id="PTHR30603:SF60">
    <property type="entry name" value="RNA POLYMERASE SIGMA FACTOR RPOD"/>
    <property type="match status" value="1"/>
</dbReference>
<dbReference type="Pfam" id="PF04546">
    <property type="entry name" value="Sigma70_ner"/>
    <property type="match status" value="1"/>
</dbReference>
<dbReference type="Pfam" id="PF03979">
    <property type="entry name" value="Sigma70_r1_1"/>
    <property type="match status" value="1"/>
</dbReference>
<dbReference type="Pfam" id="PF00140">
    <property type="entry name" value="Sigma70_r1_2"/>
    <property type="match status" value="1"/>
</dbReference>
<dbReference type="Pfam" id="PF04542">
    <property type="entry name" value="Sigma70_r2"/>
    <property type="match status" value="1"/>
</dbReference>
<dbReference type="Pfam" id="PF04539">
    <property type="entry name" value="Sigma70_r3"/>
    <property type="match status" value="1"/>
</dbReference>
<dbReference type="Pfam" id="PF04545">
    <property type="entry name" value="Sigma70_r4"/>
    <property type="match status" value="1"/>
</dbReference>
<dbReference type="PRINTS" id="PR00046">
    <property type="entry name" value="SIGMA70FCT"/>
</dbReference>
<dbReference type="SUPFAM" id="SSF88946">
    <property type="entry name" value="Sigma2 domain of RNA polymerase sigma factors"/>
    <property type="match status" value="1"/>
</dbReference>
<dbReference type="SUPFAM" id="SSF88659">
    <property type="entry name" value="Sigma3 and sigma4 domains of RNA polymerase sigma factors"/>
    <property type="match status" value="2"/>
</dbReference>
<dbReference type="PROSITE" id="PS00715">
    <property type="entry name" value="SIGMA70_1"/>
    <property type="match status" value="1"/>
</dbReference>
<dbReference type="PROSITE" id="PS00716">
    <property type="entry name" value="SIGMA70_2"/>
    <property type="match status" value="1"/>
</dbReference>
<evidence type="ECO:0000255" key="1">
    <source>
        <dbReference type="HAMAP-Rule" id="MF_00963"/>
    </source>
</evidence>
<evidence type="ECO:0000256" key="2">
    <source>
        <dbReference type="SAM" id="MobiDB-lite"/>
    </source>
</evidence>
<feature type="chain" id="PRO_0000093908" description="RNA polymerase sigma factor RpoD">
    <location>
        <begin position="1"/>
        <end position="684"/>
    </location>
</feature>
<feature type="DNA-binding region" description="H-T-H motif" evidence="1">
    <location>
        <begin position="644"/>
        <end position="663"/>
    </location>
</feature>
<feature type="region of interest" description="Disordered" evidence="2">
    <location>
        <begin position="1"/>
        <end position="26"/>
    </location>
</feature>
<feature type="region of interest" description="Disordered" evidence="2">
    <location>
        <begin position="83"/>
        <end position="128"/>
    </location>
</feature>
<feature type="region of interest" description="Disordered" evidence="2">
    <location>
        <begin position="203"/>
        <end position="262"/>
    </location>
</feature>
<feature type="region of interest" description="Sigma-70 factor domain-2" evidence="1">
    <location>
        <begin position="450"/>
        <end position="520"/>
    </location>
</feature>
<feature type="region of interest" description="Sigma-70 factor domain-3" evidence="1">
    <location>
        <begin position="529"/>
        <end position="605"/>
    </location>
</feature>
<feature type="region of interest" description="Sigma-70 factor domain-4" evidence="1">
    <location>
        <begin position="618"/>
        <end position="671"/>
    </location>
</feature>
<feature type="short sequence motif" description="Interaction with polymerase core subunit RpoC">
    <location>
        <begin position="474"/>
        <end position="477"/>
    </location>
</feature>
<feature type="compositionally biased region" description="Basic and acidic residues" evidence="2">
    <location>
        <begin position="1"/>
        <end position="18"/>
    </location>
</feature>
<feature type="compositionally biased region" description="Acidic residues" evidence="2">
    <location>
        <begin position="83"/>
        <end position="102"/>
    </location>
</feature>
<feature type="compositionally biased region" description="Basic and acidic residues" evidence="2">
    <location>
        <begin position="117"/>
        <end position="128"/>
    </location>
</feature>
<feature type="compositionally biased region" description="Basic and acidic residues" evidence="2">
    <location>
        <begin position="214"/>
        <end position="228"/>
    </location>
</feature>
<feature type="compositionally biased region" description="Acidic residues" evidence="2">
    <location>
        <begin position="250"/>
        <end position="261"/>
    </location>
</feature>
<accession>Q59753</accession>
<gene>
    <name evidence="1" type="primary">rpoD</name>
    <name type="synonym">sigA</name>
    <name type="ordered locus">R02314</name>
    <name type="ORF">SMc01563</name>
</gene>
<sequence length="684" mass="77174">MATKVKENEEADVEREGAPDGPLLDLSDDAVKKMIKAAKKRGYVTMDELNSVLPSEEVTSEQIEDTMSMLSDMGINVIEDEEAEEAAASDDDDGADEGESEGGELAPASGTALAASKKKEPTDRTDDPVRMYLREMGSVELLSREGEIAIAKRIEAGRETMIAGLCESPLTFQALIIWRDELNEGQTLLREIIDLETTYSGPEAKAAPQFQSPEKIEADRKAAEEKEKVRRTRTAANDDDITNVGGEGQAPEEEEEDDDESNLSLAAMEAELRPQVMETLDVIAETYKKLRKLQDQQVEARLAATGTLSPAQERRYKELKDELIKAVKSLSLNQNRIDALVEQLYDISKRLTQNEGRLLRLAESYGVKREAFLEQYSGAELDPNWMKSISNLAGKGWKEFARAENQTIRDIRQEIQNLATETGISIAEFRRIVSMVQKGEREARIAKKEMVEANLRLVISIAKKYTNRGLQFLDLIQEGNIGLMKAVDKFEYRRGYKFSTYATWWIRQAITRSIADQARTIRIPVHMIETINKIVRTSRQMLHEIGREPTPEELAEKLAMPLEKVRKVLKIAKEPISLETPVGDEEDSHLGDFIEDKNALLPIDAAIQANLRETTTRVLASLTPREERVLRMRFGIGMNTDHTLEEVGQQFSVTRERIRQIEAKALRKLKHPSRSRKLRSFLDS</sequence>
<comment type="function">
    <text evidence="1">Sigma factors are initiation factors that promote the attachment of RNA polymerase to specific initiation sites and are then released. This sigma factor is the primary sigma factor during exponential growth.</text>
</comment>
<comment type="subunit">
    <text evidence="1">Interacts transiently with the RNA polymerase catalytic core.</text>
</comment>
<comment type="subcellular location">
    <subcellularLocation>
        <location evidence="1">Cytoplasm</location>
    </subcellularLocation>
</comment>
<comment type="similarity">
    <text evidence="1">Belongs to the sigma-70 factor family. RpoD/SigA subfamily.</text>
</comment>
<name>RPOD_RHIME</name>
<proteinExistence type="inferred from homology"/>